<protein>
    <recommendedName>
        <fullName>Retinoblastoma-associated protein</fullName>
    </recommendedName>
    <alternativeName>
        <fullName evidence="17">p110-RB1</fullName>
    </alternativeName>
    <alternativeName>
        <fullName>pRb</fullName>
        <shortName>Rb</shortName>
    </alternativeName>
    <alternativeName>
        <fullName>pp105</fullName>
    </alternativeName>
</protein>
<name>RB_MOUSE</name>
<comment type="function">
    <text evidence="2 3 9 11 16">Tumor suppressor that is a key regulator of the G1/S transition of the cell cycle (PubMed:8336704). The hypophosphorylated form binds transcription regulators of the E2F family, preventing transcription of E2F-responsive genes. Both physically blocks E2Fs transactivating domain and recruits chromatin-modifying enzymes that actively repress transcription. Cyclin and CDK-dependent phosphorylation of RB1 induces its dissociation from E2Fs, thereby activating transcription of E2F responsive genes and triggering entry into S phase. RB1 also promotes the G0-G1 transition upon phosphorylation and activation by CDK3/cyclin-C. Directly involved in heterochromatin formation by maintaining overall chromatin structure and, in particular, that of constitutive heterochromatin by stabilizing histone methylation (PubMed:15750587). Recruits and targets histone methyltransferases SUV39H1, KMT5B and KMT5C, leading to epigenetic transcriptional repression. Controls histone H4 'Lys-20' trimethylation (PubMed:16612004). Inhibits the intrinsic kinase activity of TAF1. Mediates transcriptional repression by SMARCA4/BRG1 by recruiting a histone deacetylase (HDAC) complex to the c-FOS promoter. In resting neurons, transcription of the c-FOS promoter is inhibited by BRG1-dependent recruitment of a phospho-RB1-HDAC1 repressor complex. Upon calcium influx, RB1 is dephosphorylated by calcineurin, which leads to release of the repressor complex (By similarity) (PubMed:15750587, PubMed:16612004, PubMed:8336704).</text>
</comment>
<comment type="subunit">
    <text evidence="2 3 5 6 7 9 10 11 12 14 15 16">The hypophosphorylated form interacts with and sequesters the E2F1 transcription factor, thereby inhibiting E2F1 transcription (PubMed:36689330). Interacts with heterodimeric E2F/DP transcription factor complexes containing TFDP1 and either E2F1/E2F, E2F3, E2F4 or E2F5, or TFDP2 and E2F4 (PubMed:20940255, PubMed:8336704). Interacts (when hyperphosphorylated and hypophosphorylated) with PKP3; the interaction inhibits RB1 interaction with and repression of the transcription factor E2F1, potentially via sequestering RB1 to the cytoplasm (PubMed:36689330). The unphosphorylated form interacts with EID1, ARID3B, KDM5A, SUV39H1, MJD2A/JHDM3A and THOC1. Interacts with the N-terminal domain of TAF1. Interacts with SNW1, ATAD5, AATF, DNMT1, LIN9, LMNA, KMT5B, KMT5C, PELP1, UHRF2, TMPO-alpha and USP4. Interacts with GRIP1 and UBR4. Interacts with ARID4A and KDM5B. Interacts with E4F1 and LIMD1. Interacts with SMARCA4/BRG1 and HDAC1. Interacts with USP4. Interacts (when methylated at Lys-853) with L3MBTL1. Binds to CDK1 and CDK2. Interacts with CHEK2; phosphorylates RB1 (By similarity). Interacts with PRMT2. Interacts with CEBPA. P-TEFB complex interacts with RB1; promotes phosphorylation of RB1 (By similarity). Interacts with RBBP9; the interaction disrupts RB1 binding to E2F1 (By similarity). Interacts with KAT2B/PCAF and EP300/P300 (PubMed:20940255). Interacts with PAX5 (By similarity). Interacts (phosphorylated and unphosphorylated) with BLCAP (By similarity). May interact with NDC80.</text>
</comment>
<comment type="subunit">
    <text evidence="16">(Microbial infection) Interacts with adenovirus E1a protein.</text>
</comment>
<comment type="subunit">
    <text evidence="16">(Microbial infection) Interacts with SV40 large T antigen.</text>
</comment>
<comment type="interaction">
    <interactant intactId="EBI-971782">
        <id>P13405</id>
    </interactant>
    <interactant intactId="EBI-2211248">
        <id>Q155P7</id>
        <label>Cenpf</label>
    </interactant>
    <organismsDiffer>false</organismsDiffer>
    <experiments>4</experiments>
</comment>
<comment type="interaction">
    <interactant intactId="EBI-971782">
        <id>P13405</id>
    </interactant>
    <interactant intactId="EBI-971774">
        <id>Q80UP3</id>
        <label>Dgkz</label>
    </interactant>
    <organismsDiffer>false</organismsDiffer>
    <experiments>2</experiments>
</comment>
<comment type="interaction">
    <interactant intactId="EBI-971782">
        <id>P13405</id>
    </interactant>
    <interactant intactId="EBI-3903251">
        <id>P17679</id>
        <label>Gata1</label>
    </interactant>
    <organismsDiffer>false</organismsDiffer>
    <experiments>3</experiments>
</comment>
<comment type="interaction">
    <interactant intactId="EBI-971782">
        <id>P13405</id>
    </interactant>
    <interactant intactId="EBI-3043899">
        <id>Q9R002</id>
        <label>Ifi202</label>
    </interactant>
    <organismsDiffer>false</organismsDiffer>
    <experiments>7</experiments>
</comment>
<comment type="interaction">
    <interactant intactId="EBI-971782">
        <id>P13405</id>
    </interactant>
    <interactant intactId="EBI-1208116">
        <id>P24610</id>
        <label>Pax3</label>
    </interactant>
    <organismsDiffer>false</organismsDiffer>
    <experiments>3</experiments>
</comment>
<comment type="interaction">
    <interactant intactId="EBI-971782">
        <id>P13405</id>
    </interactant>
    <interactant intactId="EBI-7128945">
        <id>P52946</id>
        <label>Pdx1</label>
    </interactant>
    <organismsDiffer>false</organismsDiffer>
    <experiments>2</experiments>
</comment>
<comment type="interaction">
    <interactant intactId="EBI-971782">
        <id>P13405</id>
    </interactant>
    <interactant intactId="EBI-1210244">
        <id>Q3TKT4</id>
        <label>Smarca4</label>
    </interactant>
    <organismsDiffer>false</organismsDiffer>
    <experiments>3</experiments>
</comment>
<comment type="interaction">
    <interactant intactId="EBI-971782">
        <id>P13405</id>
    </interactant>
    <interactant intactId="EBI-1208174">
        <id>Q61412</id>
        <label>Vsx2</label>
    </interactant>
    <organismsDiffer>false</organismsDiffer>
    <experiments>2</experiments>
</comment>
<comment type="interaction">
    <interactant intactId="EBI-971782">
        <id>P13405</id>
    </interactant>
    <interactant intactId="EBI-3909284">
        <id>P15976</id>
        <label>GATA1</label>
    </interactant>
    <organismsDiffer>true</organismsDiffer>
    <experiments>2</experiments>
</comment>
<comment type="subcellular location">
    <subcellularLocation>
        <location evidence="15 16">Nucleus</location>
    </subcellularLocation>
    <subcellularLocation>
        <location evidence="15">Cytoplasm</location>
    </subcellularLocation>
    <text evidence="2 15">During keratinocyte differentiation, acetylation by KAT2B/PCAF is required for nuclear localization (By similarity). Localizes to the cytoplasm when hyperphosphorylated (PubMed:36689330).</text>
</comment>
<comment type="tissue specificity">
    <text evidence="8 14">Expressed in the cell nuclei of renal tubules, hepatocytes and skeletal muscles. Expressed in skin (at protein level) (PubMed:20940255).</text>
</comment>
<comment type="PTM">
    <text evidence="1 16">Phosphorylated (PubMed:8336704). Phosphorylated by CDK6 and CDK4, and subsequently by CDK2 at Ser-561 in G1, thereby releasing E2F1 which is then able to activate cell growth. Dephosphorylated at the late M phase. Phosphorylation of threonine residues in domain C promotes interaction between the C-terminal domain C and the Pocket domain, and thereby inhibits interactions with heterodimeric E2F/DP transcription factor complexes. Dephosphorylated at Ser-788 by calcineruin upon calcium stimulation. CDK3/cyclin-C-mediated phosphorylation at Ser-800 and Ser-804 is required for G0-G1 transition (By similarity). Phosphorylated by CDK1 and CDK2 upon TGFB1-mediated apoptosis (By similarity).</text>
</comment>
<comment type="PTM">
    <text evidence="1 13">Monomethylation at Lys-803 by SMYD2 enhances phosphorylation at Ser-800 and Ser-804, and promotes cell cycle progression. Monomethylation at Lys-853 by SMYD2 promotes interaction with L3MBTL1 (By similarity). N-terminus is methylated by METTL11A/NTM1.</text>
</comment>
<comment type="PTM">
    <text evidence="2 14">Acetylated in the skin (PubMed:20940255). Acetylation at Lys-866 and Lys-867 regulates subcellular localization during keratinocytes differentiation (By similarity).</text>
</comment>
<comment type="similarity">
    <text evidence="18">Belongs to the retinoblastoma protein (RB) family.</text>
</comment>
<comment type="online information" name="Wikipedia">
    <link uri="https://en.wikipedia.org/wiki/Retinoblastoma_protein"/>
    <text>Retinoblastoma protein entry</text>
</comment>
<dbReference type="EMBL" id="M26391">
    <property type="protein sequence ID" value="AAA39964.1"/>
    <property type="molecule type" value="mRNA"/>
</dbReference>
<dbReference type="EMBL" id="DQ400415">
    <property type="protein sequence ID" value="ABD72475.1"/>
    <property type="molecule type" value="mRNA"/>
</dbReference>
<dbReference type="EMBL" id="BC096525">
    <property type="protein sequence ID" value="AAH96525.1"/>
    <property type="molecule type" value="mRNA"/>
</dbReference>
<dbReference type="CCDS" id="CCDS27267.1"/>
<dbReference type="PIR" id="A33718">
    <property type="entry name" value="A33718"/>
</dbReference>
<dbReference type="RefSeq" id="NP_033055.2">
    <property type="nucleotide sequence ID" value="NM_009029.3"/>
</dbReference>
<dbReference type="SMR" id="P13405"/>
<dbReference type="BioGRID" id="202815">
    <property type="interactions" value="62"/>
</dbReference>
<dbReference type="ComplexPortal" id="CPX-160">
    <property type="entry name" value="RB1-E2F1-DP1 transcriptional repressor complex"/>
</dbReference>
<dbReference type="ComplexPortal" id="CPX-177">
    <property type="entry name" value="RB1-E2F2-DP1 transcription repressor complex"/>
</dbReference>
<dbReference type="ComplexPortal" id="CPX-470">
    <property type="entry name" value="L3MBTL1 complex"/>
</dbReference>
<dbReference type="CORUM" id="P13405"/>
<dbReference type="DIP" id="DIP-37637N"/>
<dbReference type="FunCoup" id="P13405">
    <property type="interactions" value="2940"/>
</dbReference>
<dbReference type="IntAct" id="P13405">
    <property type="interactions" value="26"/>
</dbReference>
<dbReference type="MINT" id="P13405"/>
<dbReference type="STRING" id="10090.ENSMUSP00000022701"/>
<dbReference type="iPTMnet" id="P13405"/>
<dbReference type="PhosphoSitePlus" id="P13405"/>
<dbReference type="jPOST" id="P13405"/>
<dbReference type="PaxDb" id="10090-ENSMUSP00000022701"/>
<dbReference type="PeptideAtlas" id="P13405"/>
<dbReference type="ProteomicsDB" id="255135"/>
<dbReference type="Pumba" id="P13405"/>
<dbReference type="Antibodypedia" id="3758">
    <property type="antibodies" value="3575 antibodies from 52 providers"/>
</dbReference>
<dbReference type="DNASU" id="19645"/>
<dbReference type="Ensembl" id="ENSMUST00000022701.7">
    <property type="protein sequence ID" value="ENSMUSP00000022701.7"/>
    <property type="gene ID" value="ENSMUSG00000022105.7"/>
</dbReference>
<dbReference type="GeneID" id="19645"/>
<dbReference type="KEGG" id="mmu:19645"/>
<dbReference type="UCSC" id="uc007upp.2">
    <property type="organism name" value="mouse"/>
</dbReference>
<dbReference type="AGR" id="MGI:97874"/>
<dbReference type="CTD" id="5925"/>
<dbReference type="MGI" id="MGI:97874">
    <property type="gene designation" value="Rb1"/>
</dbReference>
<dbReference type="VEuPathDB" id="HostDB:ENSMUSG00000022105"/>
<dbReference type="eggNOG" id="KOG1010">
    <property type="taxonomic scope" value="Eukaryota"/>
</dbReference>
<dbReference type="GeneTree" id="ENSGT00950000183202"/>
<dbReference type="HOGENOM" id="CLU_015754_0_0_1"/>
<dbReference type="InParanoid" id="P13405"/>
<dbReference type="OMA" id="VKDIGCI"/>
<dbReference type="OrthoDB" id="844594at2759"/>
<dbReference type="PhylomeDB" id="P13405"/>
<dbReference type="TreeFam" id="TF105568"/>
<dbReference type="Reactome" id="R-MMU-113501">
    <property type="pathway name" value="Inhibition of replication initiation of damaged DNA by RB1/E2F1"/>
</dbReference>
<dbReference type="Reactome" id="R-MMU-174178">
    <property type="pathway name" value="APC/C:Cdh1 mediated degradation of Cdc20 and other APC/C:Cdh1 targeted proteins in late mitosis/early G1"/>
</dbReference>
<dbReference type="Reactome" id="R-MMU-2299718">
    <property type="pathway name" value="Condensation of Prophase Chromosomes"/>
</dbReference>
<dbReference type="Reactome" id="R-MMU-2559584">
    <property type="pathway name" value="Formation of Senescence-Associated Heterochromatin Foci (SAHF)"/>
</dbReference>
<dbReference type="Reactome" id="R-MMU-69200">
    <property type="pathway name" value="Phosphorylation of proteins involved in G1/S transition by active Cyclin E:Cdk2 complexes"/>
</dbReference>
<dbReference type="Reactome" id="R-MMU-69202">
    <property type="pathway name" value="Cyclin E associated events during G1/S transition"/>
</dbReference>
<dbReference type="Reactome" id="R-MMU-69231">
    <property type="pathway name" value="Cyclin D associated events in G1"/>
</dbReference>
<dbReference type="Reactome" id="R-MMU-69656">
    <property type="pathway name" value="Cyclin A:Cdk2-associated events at S phase entry"/>
</dbReference>
<dbReference type="BioGRID-ORCS" id="19645">
    <property type="hits" value="4 hits in 84 CRISPR screens"/>
</dbReference>
<dbReference type="ChiTaRS" id="Rb1">
    <property type="organism name" value="mouse"/>
</dbReference>
<dbReference type="PRO" id="PR:P13405"/>
<dbReference type="Proteomes" id="UP000000589">
    <property type="component" value="Chromosome 14"/>
</dbReference>
<dbReference type="RNAct" id="P13405">
    <property type="molecule type" value="protein"/>
</dbReference>
<dbReference type="Bgee" id="ENSMUSG00000022105">
    <property type="expression patterns" value="Expressed in molar tooth and 270 other cell types or tissues"/>
</dbReference>
<dbReference type="ExpressionAtlas" id="P13405">
    <property type="expression patterns" value="baseline and differential"/>
</dbReference>
<dbReference type="GO" id="GO:0061793">
    <property type="term" value="C:chromatin lock complex"/>
    <property type="evidence" value="ECO:0000266"/>
    <property type="project" value="ComplexPortal"/>
</dbReference>
<dbReference type="GO" id="GO:0008024">
    <property type="term" value="C:cyclin/CDK positive transcription elongation factor complex"/>
    <property type="evidence" value="ECO:0007669"/>
    <property type="project" value="Ensembl"/>
</dbReference>
<dbReference type="GO" id="GO:0005737">
    <property type="term" value="C:cytoplasm"/>
    <property type="evidence" value="ECO:0000314"/>
    <property type="project" value="UniProtKB"/>
</dbReference>
<dbReference type="GO" id="GO:0005654">
    <property type="term" value="C:nucleoplasm"/>
    <property type="evidence" value="ECO:0000304"/>
    <property type="project" value="Reactome"/>
</dbReference>
<dbReference type="GO" id="GO:0005634">
    <property type="term" value="C:nucleus"/>
    <property type="evidence" value="ECO:0000314"/>
    <property type="project" value="UniProtKB"/>
</dbReference>
<dbReference type="GO" id="GO:0016605">
    <property type="term" value="C:PML body"/>
    <property type="evidence" value="ECO:0000250"/>
    <property type="project" value="UniProtKB"/>
</dbReference>
<dbReference type="GO" id="GO:0035189">
    <property type="term" value="C:Rb-E2F complex"/>
    <property type="evidence" value="ECO:0000314"/>
    <property type="project" value="UniProtKB"/>
</dbReference>
<dbReference type="GO" id="GO:0005819">
    <property type="term" value="C:spindle"/>
    <property type="evidence" value="ECO:0000314"/>
    <property type="project" value="MGI"/>
</dbReference>
<dbReference type="GO" id="GO:0005667">
    <property type="term" value="C:transcription regulator complex"/>
    <property type="evidence" value="ECO:0000314"/>
    <property type="project" value="MGI"/>
</dbReference>
<dbReference type="GO" id="GO:0097718">
    <property type="term" value="F:disordered domain specific binding"/>
    <property type="evidence" value="ECO:0007669"/>
    <property type="project" value="Ensembl"/>
</dbReference>
<dbReference type="GO" id="GO:0003677">
    <property type="term" value="F:DNA binding"/>
    <property type="evidence" value="ECO:0007669"/>
    <property type="project" value="UniProtKB-KW"/>
</dbReference>
<dbReference type="GO" id="GO:0140297">
    <property type="term" value="F:DNA-binding transcription factor binding"/>
    <property type="evidence" value="ECO:0000353"/>
    <property type="project" value="UniProtKB"/>
</dbReference>
<dbReference type="GO" id="GO:0019899">
    <property type="term" value="F:enzyme binding"/>
    <property type="evidence" value="ECO:0000353"/>
    <property type="project" value="UniProtKB"/>
</dbReference>
<dbReference type="GO" id="GO:0042802">
    <property type="term" value="F:identical protein binding"/>
    <property type="evidence" value="ECO:0007669"/>
    <property type="project" value="Ensembl"/>
</dbReference>
<dbReference type="GO" id="GO:0061676">
    <property type="term" value="F:importin-alpha family protein binding"/>
    <property type="evidence" value="ECO:0007669"/>
    <property type="project" value="Ensembl"/>
</dbReference>
<dbReference type="GO" id="GO:0019900">
    <property type="term" value="F:kinase binding"/>
    <property type="evidence" value="ECO:0000250"/>
    <property type="project" value="UniProtKB"/>
</dbReference>
<dbReference type="GO" id="GO:0051219">
    <property type="term" value="F:phosphoprotein binding"/>
    <property type="evidence" value="ECO:0007669"/>
    <property type="project" value="Ensembl"/>
</dbReference>
<dbReference type="GO" id="GO:0061629">
    <property type="term" value="F:RNA polymerase II-specific DNA-binding transcription factor binding"/>
    <property type="evidence" value="ECO:0000353"/>
    <property type="project" value="BHF-UCL"/>
</dbReference>
<dbReference type="GO" id="GO:0031625">
    <property type="term" value="F:ubiquitin protein ligase binding"/>
    <property type="evidence" value="ECO:0007669"/>
    <property type="project" value="Ensembl"/>
</dbReference>
<dbReference type="GO" id="GO:0003180">
    <property type="term" value="P:aortic valve morphogenesis"/>
    <property type="evidence" value="ECO:0000315"/>
    <property type="project" value="BHF-UCL"/>
</dbReference>
<dbReference type="GO" id="GO:0006915">
    <property type="term" value="P:apoptotic process"/>
    <property type="evidence" value="ECO:0000315"/>
    <property type="project" value="MGI"/>
</dbReference>
<dbReference type="GO" id="GO:0051301">
    <property type="term" value="P:cell division"/>
    <property type="evidence" value="ECO:0000315"/>
    <property type="project" value="MGI"/>
</dbReference>
<dbReference type="GO" id="GO:0048667">
    <property type="term" value="P:cell morphogenesis involved in neuron differentiation"/>
    <property type="evidence" value="ECO:0000315"/>
    <property type="project" value="MGI"/>
</dbReference>
<dbReference type="GO" id="GO:0008283">
    <property type="term" value="P:cell population proliferation"/>
    <property type="evidence" value="ECO:0000315"/>
    <property type="project" value="MGI"/>
</dbReference>
<dbReference type="GO" id="GO:0032869">
    <property type="term" value="P:cellular response to insulin stimulus"/>
    <property type="evidence" value="ECO:0000314"/>
    <property type="project" value="MGI"/>
</dbReference>
<dbReference type="GO" id="GO:0071466">
    <property type="term" value="P:cellular response to xenobiotic stimulus"/>
    <property type="evidence" value="ECO:0000315"/>
    <property type="project" value="MGI"/>
</dbReference>
<dbReference type="GO" id="GO:0002062">
    <property type="term" value="P:chondrocyte differentiation"/>
    <property type="evidence" value="ECO:0000314"/>
    <property type="project" value="MGI"/>
</dbReference>
<dbReference type="GO" id="GO:0048565">
    <property type="term" value="P:digestive tract development"/>
    <property type="evidence" value="ECO:0000315"/>
    <property type="project" value="MGI"/>
</dbReference>
<dbReference type="GO" id="GO:0043353">
    <property type="term" value="P:enucleate erythrocyte differentiation"/>
    <property type="evidence" value="ECO:0000316"/>
    <property type="project" value="MGI"/>
</dbReference>
<dbReference type="GO" id="GO:0050673">
    <property type="term" value="P:epithelial cell proliferation"/>
    <property type="evidence" value="ECO:0000315"/>
    <property type="project" value="MGI"/>
</dbReference>
<dbReference type="GO" id="GO:0000082">
    <property type="term" value="P:G1/S transition of mitotic cell cycle"/>
    <property type="evidence" value="ECO:0000315"/>
    <property type="project" value="MGI"/>
</dbReference>
<dbReference type="GO" id="GO:0034349">
    <property type="term" value="P:glial cell apoptotic process"/>
    <property type="evidence" value="ECO:0000315"/>
    <property type="project" value="MGI"/>
</dbReference>
<dbReference type="GO" id="GO:0014009">
    <property type="term" value="P:glial cell proliferation"/>
    <property type="evidence" value="ECO:0000316"/>
    <property type="project" value="MGI"/>
</dbReference>
<dbReference type="GO" id="GO:0097284">
    <property type="term" value="P:hepatocyte apoptotic process"/>
    <property type="evidence" value="ECO:0000315"/>
    <property type="project" value="MGI"/>
</dbReference>
<dbReference type="GO" id="GO:0031507">
    <property type="term" value="P:heterochromatin formation"/>
    <property type="evidence" value="ECO:0000266"/>
    <property type="project" value="ComplexPortal"/>
</dbReference>
<dbReference type="GO" id="GO:0034088">
    <property type="term" value="P:maintenance of mitotic sister chromatid cohesion"/>
    <property type="evidence" value="ECO:0007669"/>
    <property type="project" value="Ensembl"/>
</dbReference>
<dbReference type="GO" id="GO:0045445">
    <property type="term" value="P:myoblast differentiation"/>
    <property type="evidence" value="ECO:0000250"/>
    <property type="project" value="UniProtKB"/>
</dbReference>
<dbReference type="GO" id="GO:2001234">
    <property type="term" value="P:negative regulation of apoptotic signaling pathway"/>
    <property type="evidence" value="ECO:0007669"/>
    <property type="project" value="Ensembl"/>
</dbReference>
<dbReference type="GO" id="GO:0045786">
    <property type="term" value="P:negative regulation of cell cycle"/>
    <property type="evidence" value="ECO:0000315"/>
    <property type="project" value="MGI"/>
</dbReference>
<dbReference type="GO" id="GO:0030308">
    <property type="term" value="P:negative regulation of cell growth"/>
    <property type="evidence" value="ECO:0000314"/>
    <property type="project" value="UniProtKB"/>
</dbReference>
<dbReference type="GO" id="GO:0008285">
    <property type="term" value="P:negative regulation of cell population proliferation"/>
    <property type="evidence" value="ECO:0000315"/>
    <property type="project" value="MGI"/>
</dbReference>
<dbReference type="GO" id="GO:0120163">
    <property type="term" value="P:negative regulation of cold-induced thermogenesis"/>
    <property type="evidence" value="ECO:0000315"/>
    <property type="project" value="YuBioLab"/>
</dbReference>
<dbReference type="GO" id="GO:0045892">
    <property type="term" value="P:negative regulation of DNA-templated transcription"/>
    <property type="evidence" value="ECO:0000314"/>
    <property type="project" value="MGI"/>
</dbReference>
<dbReference type="GO" id="GO:0050680">
    <property type="term" value="P:negative regulation of epithelial cell proliferation"/>
    <property type="evidence" value="ECO:0000315"/>
    <property type="project" value="MGI"/>
</dbReference>
<dbReference type="GO" id="GO:2000134">
    <property type="term" value="P:negative regulation of G1/S transition of mitotic cell cycle"/>
    <property type="evidence" value="ECO:0000315"/>
    <property type="project" value="MGI"/>
</dbReference>
<dbReference type="GO" id="GO:0010629">
    <property type="term" value="P:negative regulation of gene expression"/>
    <property type="evidence" value="ECO:0000315"/>
    <property type="project" value="MGI"/>
</dbReference>
<dbReference type="GO" id="GO:0060253">
    <property type="term" value="P:negative regulation of glial cell proliferation"/>
    <property type="evidence" value="ECO:0000316"/>
    <property type="project" value="MGI"/>
</dbReference>
<dbReference type="GO" id="GO:1903944">
    <property type="term" value="P:negative regulation of hepatocyte apoptotic process"/>
    <property type="evidence" value="ECO:0007669"/>
    <property type="project" value="Ensembl"/>
</dbReference>
<dbReference type="GO" id="GO:0050728">
    <property type="term" value="P:negative regulation of inflammatory response"/>
    <property type="evidence" value="ECO:0000315"/>
    <property type="project" value="BHF-UCL"/>
</dbReference>
<dbReference type="GO" id="GO:0045930">
    <property type="term" value="P:negative regulation of mitotic cell cycle"/>
    <property type="evidence" value="ECO:0000316"/>
    <property type="project" value="MGI"/>
</dbReference>
<dbReference type="GO" id="GO:1904761">
    <property type="term" value="P:negative regulation of myofibroblast differentiation"/>
    <property type="evidence" value="ECO:0000315"/>
    <property type="project" value="BHF-UCL"/>
</dbReference>
<dbReference type="GO" id="GO:0006469">
    <property type="term" value="P:negative regulation of protein kinase activity"/>
    <property type="evidence" value="ECO:0000250"/>
    <property type="project" value="UniProtKB"/>
</dbReference>
<dbReference type="GO" id="GO:0045879">
    <property type="term" value="P:negative regulation of smoothened signaling pathway"/>
    <property type="evidence" value="ECO:0000315"/>
    <property type="project" value="MGI"/>
</dbReference>
<dbReference type="GO" id="GO:0000122">
    <property type="term" value="P:negative regulation of transcription by RNA polymerase II"/>
    <property type="evidence" value="ECO:0000314"/>
    <property type="project" value="MGI"/>
</dbReference>
<dbReference type="GO" id="GO:0051402">
    <property type="term" value="P:neuron apoptotic process"/>
    <property type="evidence" value="ECO:0000315"/>
    <property type="project" value="MGI"/>
</dbReference>
<dbReference type="GO" id="GO:0030182">
    <property type="term" value="P:neuron differentiation"/>
    <property type="evidence" value="ECO:0000315"/>
    <property type="project" value="MGI"/>
</dbReference>
<dbReference type="GO" id="GO:0042551">
    <property type="term" value="P:neuron maturation"/>
    <property type="evidence" value="ECO:0000315"/>
    <property type="project" value="MGI"/>
</dbReference>
<dbReference type="GO" id="GO:0031175">
    <property type="term" value="P:neuron projection development"/>
    <property type="evidence" value="ECO:0000315"/>
    <property type="project" value="MGI"/>
</dbReference>
<dbReference type="GO" id="GO:1904028">
    <property type="term" value="P:positive regulation of collagen fibril organization"/>
    <property type="evidence" value="ECO:0000315"/>
    <property type="project" value="BHF-UCL"/>
</dbReference>
<dbReference type="GO" id="GO:1903055">
    <property type="term" value="P:positive regulation of extracellular matrix organization"/>
    <property type="evidence" value="ECO:0000315"/>
    <property type="project" value="BHF-UCL"/>
</dbReference>
<dbReference type="GO" id="GO:0045651">
    <property type="term" value="P:positive regulation of macrophage differentiation"/>
    <property type="evidence" value="ECO:0000316"/>
    <property type="project" value="MGI"/>
</dbReference>
<dbReference type="GO" id="GO:0045842">
    <property type="term" value="P:positive regulation of mitotic metaphase/anaphase transition"/>
    <property type="evidence" value="ECO:0007669"/>
    <property type="project" value="Ensembl"/>
</dbReference>
<dbReference type="GO" id="GO:0045944">
    <property type="term" value="P:positive regulation of transcription by RNA polymerase II"/>
    <property type="evidence" value="ECO:0000314"/>
    <property type="project" value="MGI"/>
</dbReference>
<dbReference type="GO" id="GO:0071459">
    <property type="term" value="P:protein localization to chromosome, centromeric region"/>
    <property type="evidence" value="ECO:0007669"/>
    <property type="project" value="Ensembl"/>
</dbReference>
<dbReference type="GO" id="GO:0007265">
    <property type="term" value="P:Ras protein signal transduction"/>
    <property type="evidence" value="ECO:0007669"/>
    <property type="project" value="Ensembl"/>
</dbReference>
<dbReference type="GO" id="GO:0051726">
    <property type="term" value="P:regulation of cell cycle"/>
    <property type="evidence" value="ECO:0000315"/>
    <property type="project" value="MGI"/>
</dbReference>
<dbReference type="GO" id="GO:0001558">
    <property type="term" value="P:regulation of cell growth"/>
    <property type="evidence" value="ECO:0000316"/>
    <property type="project" value="MGI"/>
</dbReference>
<dbReference type="GO" id="GO:0006355">
    <property type="term" value="P:regulation of DNA-templated transcription"/>
    <property type="evidence" value="ECO:0000266"/>
    <property type="project" value="ComplexPortal"/>
</dbReference>
<dbReference type="GO" id="GO:2000045">
    <property type="term" value="P:regulation of G1/S transition of mitotic cell cycle"/>
    <property type="evidence" value="ECO:0000316"/>
    <property type="project" value="BHF-UCL"/>
</dbReference>
<dbReference type="GO" id="GO:0043550">
    <property type="term" value="P:regulation of lipid kinase activity"/>
    <property type="evidence" value="ECO:0000250"/>
    <property type="project" value="UniProtKB"/>
</dbReference>
<dbReference type="GO" id="GO:0007346">
    <property type="term" value="P:regulation of mitotic cell cycle"/>
    <property type="evidence" value="ECO:0000315"/>
    <property type="project" value="MGI"/>
</dbReference>
<dbReference type="GO" id="GO:0031134">
    <property type="term" value="P:sister chromatid biorientation"/>
    <property type="evidence" value="ECO:0007669"/>
    <property type="project" value="Ensembl"/>
</dbReference>
<dbReference type="GO" id="GO:0035914">
    <property type="term" value="P:skeletal muscle cell differentiation"/>
    <property type="evidence" value="ECO:0000315"/>
    <property type="project" value="MGI"/>
</dbReference>
<dbReference type="GO" id="GO:0007224">
    <property type="term" value="P:smoothened signaling pathway"/>
    <property type="evidence" value="ECO:0000315"/>
    <property type="project" value="MGI"/>
</dbReference>
<dbReference type="GO" id="GO:0007283">
    <property type="term" value="P:spermatogenesis"/>
    <property type="evidence" value="ECO:0007669"/>
    <property type="project" value="Ensembl"/>
</dbReference>
<dbReference type="GO" id="GO:0051146">
    <property type="term" value="P:striated muscle cell differentiation"/>
    <property type="evidence" value="ECO:0000316"/>
    <property type="project" value="MGI"/>
</dbReference>
<dbReference type="GO" id="GO:0001894">
    <property type="term" value="P:tissue homeostasis"/>
    <property type="evidence" value="ECO:0000316"/>
    <property type="project" value="MGI"/>
</dbReference>
<dbReference type="GO" id="GO:0006366">
    <property type="term" value="P:transcription by RNA polymerase II"/>
    <property type="evidence" value="ECO:0000316"/>
    <property type="project" value="MGI"/>
</dbReference>
<dbReference type="CDD" id="cd20599">
    <property type="entry name" value="CYCLIN_RB"/>
    <property type="match status" value="1"/>
</dbReference>
<dbReference type="FunFam" id="1.10.472.10:FF:000039">
    <property type="entry name" value="RB transcriptional corepressor 1"/>
    <property type="match status" value="1"/>
</dbReference>
<dbReference type="FunFam" id="1.10.472.140:FF:000002">
    <property type="entry name" value="RB transcriptional corepressor 1"/>
    <property type="match status" value="1"/>
</dbReference>
<dbReference type="FunFam" id="1.10.472.10:FF:000033">
    <property type="entry name" value="retinoblastoma-associated protein isoform X1"/>
    <property type="match status" value="1"/>
</dbReference>
<dbReference type="Gene3D" id="1.10.472.140">
    <property type="match status" value="1"/>
</dbReference>
<dbReference type="Gene3D" id="6.10.140.1380">
    <property type="match status" value="1"/>
</dbReference>
<dbReference type="Gene3D" id="6.10.250.530">
    <property type="match status" value="1"/>
</dbReference>
<dbReference type="Gene3D" id="1.10.472.10">
    <property type="entry name" value="Cyclin-like"/>
    <property type="match status" value="2"/>
</dbReference>
<dbReference type="InterPro" id="IPR013763">
    <property type="entry name" value="Cyclin-like_dom"/>
</dbReference>
<dbReference type="InterPro" id="IPR036915">
    <property type="entry name" value="Cyclin-like_sf"/>
</dbReference>
<dbReference type="InterPro" id="IPR002720">
    <property type="entry name" value="RB_A"/>
</dbReference>
<dbReference type="InterPro" id="IPR002719">
    <property type="entry name" value="RB_B"/>
</dbReference>
<dbReference type="InterPro" id="IPR015030">
    <property type="entry name" value="RB_C"/>
</dbReference>
<dbReference type="InterPro" id="IPR028309">
    <property type="entry name" value="RB_fam"/>
</dbReference>
<dbReference type="InterPro" id="IPR024599">
    <property type="entry name" value="RB_N"/>
</dbReference>
<dbReference type="PANTHER" id="PTHR13742:SF36">
    <property type="entry name" value="RETINOBLASTOMA-ASSOCIATED PROTEIN"/>
    <property type="match status" value="1"/>
</dbReference>
<dbReference type="PANTHER" id="PTHR13742">
    <property type="entry name" value="RETINOBLASTOMA-ASSOCIATED PROTEIN RB -RELATED"/>
    <property type="match status" value="1"/>
</dbReference>
<dbReference type="Pfam" id="PF11934">
    <property type="entry name" value="DUF3452"/>
    <property type="match status" value="1"/>
</dbReference>
<dbReference type="Pfam" id="PF01858">
    <property type="entry name" value="RB_A"/>
    <property type="match status" value="1"/>
</dbReference>
<dbReference type="Pfam" id="PF01857">
    <property type="entry name" value="RB_B"/>
    <property type="match status" value="1"/>
</dbReference>
<dbReference type="Pfam" id="PF08934">
    <property type="entry name" value="Rb_C"/>
    <property type="match status" value="1"/>
</dbReference>
<dbReference type="SMART" id="SM00385">
    <property type="entry name" value="CYCLIN"/>
    <property type="match status" value="1"/>
</dbReference>
<dbReference type="SMART" id="SM01367">
    <property type="entry name" value="DUF3452"/>
    <property type="match status" value="1"/>
</dbReference>
<dbReference type="SMART" id="SM01368">
    <property type="entry name" value="RB_A"/>
    <property type="match status" value="1"/>
</dbReference>
<dbReference type="SMART" id="SM01369">
    <property type="entry name" value="Rb_C"/>
    <property type="match status" value="1"/>
</dbReference>
<dbReference type="SUPFAM" id="SSF47954">
    <property type="entry name" value="Cyclin-like"/>
    <property type="match status" value="2"/>
</dbReference>
<reference key="1">
    <citation type="journal article" date="1989" name="Proc. Natl. Acad. Sci. U.S.A.">
        <title>Structure and expression of the murine retinoblastoma gene and characterization of its encoded protein.</title>
        <authorList>
            <person name="Bernards R."/>
            <person name="Schackleford G.M."/>
            <person name="Gerber M.R."/>
            <person name="Horowitz J.M."/>
            <person name="Friend S.H."/>
            <person name="Schartl M."/>
            <person name="Bogenmann E."/>
            <person name="Rapaport J."/>
            <person name="McGee T."/>
            <person name="Dryja T.P."/>
            <person name="Weinberg R.A."/>
        </authorList>
    </citation>
    <scope>NUCLEOTIDE SEQUENCE [MRNA]</scope>
</reference>
<reference key="2">
    <citation type="submission" date="2006-02" db="EMBL/GenBank/DDBJ databases">
        <title>Sequencing of the full-length cDNA sequence of the murine retinoblastoma gene.</title>
        <authorList>
            <person name="Wu J."/>
            <person name="Liao J.D."/>
        </authorList>
    </citation>
    <scope>NUCLEOTIDE SEQUENCE [MRNA]</scope>
</reference>
<reference key="3">
    <citation type="journal article" date="2004" name="Genome Res.">
        <title>The status, quality, and expansion of the NIH full-length cDNA project: the Mammalian Gene Collection (MGC).</title>
        <authorList>
            <consortium name="The MGC Project Team"/>
        </authorList>
    </citation>
    <scope>NUCLEOTIDE SEQUENCE [LARGE SCALE MRNA]</scope>
    <source>
        <strain>C57BL/6J</strain>
        <tissue>Brain</tissue>
    </source>
</reference>
<reference key="4">
    <citation type="journal article" date="1993" name="Mol. Cell. Biol.">
        <title>A bipartite nuclear localization signal in the retinoblastoma gene product and its importance for biological activity.</title>
        <authorList>
            <person name="Zacksenhaus E."/>
            <person name="Bremner R."/>
            <person name="Phillips R.A."/>
            <person name="Gallie B.L."/>
        </authorList>
    </citation>
    <scope>FUNCTION</scope>
    <scope>SUBCELLULAR LOCATION</scope>
    <scope>IDENTIFICATION OF THE NUCLEAR LOCALIZATION SIGNAL</scope>
    <scope>MUTAGENESIS OF 733-LYS--PRO-769; 769-PRO--ILE-872; 853-LYS--ARG-869 AND 866-LYS--ARG-869</scope>
    <scope>INTERACTION WITH ADENOVIRUS E1A PROTEIN AND SV40 LARGE T ANTIGEN (MICROBIAL INFECTION)</scope>
    <scope>INTERACTION WITH E2F1</scope>
    <scope>PHOSPHORYLATION</scope>
</reference>
<reference key="5">
    <citation type="journal article" date="2000" name="Nat. Genet.">
        <title>DNMT1 forms a complex with Rb, E2F1 and HDAC1 and represses transcription from E2F-responsive promoters.</title>
        <authorList>
            <person name="Robertson K.D."/>
            <person name="Ait-Si-Ali S."/>
            <person name="Yokochi T."/>
            <person name="Wade P.A."/>
            <person name="Jones P.L."/>
            <person name="Wolffe A.P."/>
        </authorList>
    </citation>
    <scope>INTERACTION WITH DNMT1</scope>
</reference>
<reference key="6">
    <citation type="journal article" date="2000" name="Proc. Natl. Acad. Sci. U.S.A.">
        <title>pRB binds to and modulates the transrepressing activity of the E1A-regulated transcription factor p120E4F.</title>
        <authorList>
            <person name="Fajas L."/>
            <person name="Paul C."/>
            <person name="Zugasti O."/>
            <person name="Le Cam L."/>
            <person name="Polanowska J."/>
            <person name="Fabbrizio E."/>
            <person name="Medema R."/>
            <person name="Vignais M.-L."/>
            <person name="Sardet C."/>
        </authorList>
    </citation>
    <scope>INTERACTION WITH E4F1</scope>
</reference>
<reference key="7">
    <citation type="journal article" date="2001" name="Oncogene">
        <title>Association of UNP, a ubiquitin-specific protease, with the pocket proteins pRb, p107 and p130.</title>
        <authorList>
            <person name="Blanchette P."/>
            <person name="Gilchrist C.A."/>
            <person name="Baker R.T."/>
            <person name="Gray D.A."/>
        </authorList>
    </citation>
    <scope>INTERACTION WITH USP4</scope>
</reference>
<reference key="8">
    <citation type="journal article" date="2002" name="Gene">
        <title>Isolation, characterization and mapping of the mouse and human RB1CC1 genes.</title>
        <authorList>
            <person name="Chano T."/>
            <person name="Ikegawa S."/>
            <person name="Saito-Ohara F."/>
            <person name="Inazawa J."/>
            <person name="Mabuchi A."/>
            <person name="Saeki Y."/>
            <person name="Okabe H."/>
        </authorList>
    </citation>
    <scope>TISSUE SPECIFICITY</scope>
    <source>
        <strain>C57BL/6J</strain>
        <tissue>Skeletal muscle</tissue>
    </source>
</reference>
<reference key="9">
    <citation type="journal article" date="2005" name="Nat. Cell Biol.">
        <title>Role of the RB1 family in stabilizing histone methylation at constitutive heterochromatin.</title>
        <authorList>
            <person name="Gonzalo S."/>
            <person name="Garcia-Cao M."/>
            <person name="Fraga M.F."/>
            <person name="Schotta G."/>
            <person name="Peters A.H.F.M."/>
            <person name="Cotter S.E."/>
            <person name="Eguia R."/>
            <person name="Dean D.C."/>
            <person name="Esteller M."/>
            <person name="Jenuwein T."/>
            <person name="Blasco M.A."/>
        </authorList>
    </citation>
    <scope>FUNCTION</scope>
    <scope>INTERACTION WITH KMT5B AND KMT5C</scope>
</reference>
<reference key="10">
    <citation type="journal article" date="2005" name="Proc. Natl. Acad. Sci. U.S.A.">
        <title>Frag1, a homolog of alternative replication factor C subunits, links replication stress surveillance with apoptosis.</title>
        <authorList>
            <person name="Ishii H."/>
            <person name="Inageta T."/>
            <person name="Mimori K."/>
            <person name="Saito T."/>
            <person name="Sasaki H."/>
            <person name="Isobe M."/>
            <person name="Mori M."/>
            <person name="Croce C.M."/>
            <person name="Huebner K."/>
            <person name="Ozawa K."/>
            <person name="Furukawa Y."/>
        </authorList>
    </citation>
    <scope>INTERACTION WITH ATAD5</scope>
</reference>
<reference key="11">
    <citation type="journal article" date="2006" name="Exp. Cell Res.">
        <title>The arginine methyltransferase PRMT2 binds RB and regulates E2F function.</title>
        <authorList>
            <person name="Yoshimoto T."/>
            <person name="Boehm M."/>
            <person name="Olive M."/>
            <person name="Crook M.F."/>
            <person name="San H."/>
            <person name="Langenickel T."/>
            <person name="Nabel E.G."/>
        </authorList>
    </citation>
    <scope>INTERACTION WITH PRMT2</scope>
</reference>
<reference key="12">
    <citation type="journal article" date="2006" name="Mol. Cell. Biol.">
        <title>The retinoblastoma protein regulates pericentric heterochromatin.</title>
        <authorList>
            <person name="Isaac C.E."/>
            <person name="Francis S.M."/>
            <person name="Martens A.L."/>
            <person name="Julian L.M."/>
            <person name="Seifried L.A."/>
            <person name="Erdmann N."/>
            <person name="Binne U.K."/>
            <person name="Harrington L."/>
            <person name="Sicinski P."/>
            <person name="Berube N.G."/>
            <person name="Dyson N.J."/>
            <person name="Dick F.A."/>
        </authorList>
    </citation>
    <scope>FUNCTION</scope>
    <scope>INTERACTION WITH KMT5B AND KMT5C</scope>
    <scope>MUTAGENESIS OF ILE-746; ASN-750 AND MET-754</scope>
</reference>
<reference key="13">
    <citation type="journal article" date="2010" name="Cell">
        <title>A tissue-specific atlas of mouse protein phosphorylation and expression.</title>
        <authorList>
            <person name="Huttlin E.L."/>
            <person name="Jedrychowski M.P."/>
            <person name="Elias J.E."/>
            <person name="Goswami T."/>
            <person name="Rad R."/>
            <person name="Beausoleil S.A."/>
            <person name="Villen J."/>
            <person name="Haas W."/>
            <person name="Sowa M.E."/>
            <person name="Gygi S.P."/>
        </authorList>
    </citation>
    <scope>PHOSPHORYLATION [LARGE SCALE ANALYSIS] AT SER-31; SER-243; THR-246; THR-364; THR-367; SER-601; SER-605; SER-773; SER-800; SER-804; THR-814; THR-819 AND SER-848</scope>
    <scope>IDENTIFICATION BY MASS SPECTROMETRY [LARGE SCALE ANALYSIS]</scope>
    <source>
        <tissue>Kidney</tissue>
        <tissue>Lung</tissue>
        <tissue>Spleen</tissue>
        <tissue>Testis</tissue>
    </source>
</reference>
<reference key="14">
    <citation type="journal article" date="2010" name="J. Cell Sci.">
        <title>Acetylation of Rb by PCAF is required for nuclear localization and keratinocyte differentiation.</title>
        <authorList>
            <person name="Pickard A."/>
            <person name="Wong P.P."/>
            <person name="McCance D.J."/>
        </authorList>
    </citation>
    <scope>TISSUE SPECIFICITY</scope>
    <scope>ACETYLATION</scope>
    <scope>INTERACTION WITH E2F1; EP300 AND KAT2B</scope>
</reference>
<reference key="15">
    <citation type="journal article" date="2010" name="Nature">
        <title>NRMT is an alpha-N-methyltransferase that methylates RCC1 and retinoblastoma protein.</title>
        <authorList>
            <person name="Tooley C.E."/>
            <person name="Petkowski J.J."/>
            <person name="Muratore-Schroeder T.L."/>
            <person name="Balsbaugh J.L."/>
            <person name="Shabanowitz J."/>
            <person name="Sabat M."/>
            <person name="Minor W."/>
            <person name="Hunt D.F."/>
            <person name="Macara I.G."/>
        </authorList>
    </citation>
    <scope>CLEAVAGE OF INITIATOR METHIONINE</scope>
    <scope>METHYLATION AT PRO-2</scope>
</reference>
<reference key="16">
    <citation type="journal article" date="2023" name="Cell Rep.">
        <title>Plakophilin 3 facilitates G1/S phase transition and enhances proliferation by capturing RB protein in the cytoplasm and promoting EGFR signaling.</title>
        <authorList>
            <person name="Mueller L."/>
            <person name="Keil R."/>
            <person name="Hatzfeld M."/>
        </authorList>
    </citation>
    <scope>INTERACTION WITH PKP3 AND E2F1</scope>
    <scope>SUBCELLULAR LOCATION</scope>
</reference>
<accession>P13405</accession>
<accession>Q4VA62</accession>
<organism>
    <name type="scientific">Mus musculus</name>
    <name type="common">Mouse</name>
    <dbReference type="NCBI Taxonomy" id="10090"/>
    <lineage>
        <taxon>Eukaryota</taxon>
        <taxon>Metazoa</taxon>
        <taxon>Chordata</taxon>
        <taxon>Craniata</taxon>
        <taxon>Vertebrata</taxon>
        <taxon>Euteleostomi</taxon>
        <taxon>Mammalia</taxon>
        <taxon>Eutheria</taxon>
        <taxon>Euarchontoglires</taxon>
        <taxon>Glires</taxon>
        <taxon>Rodentia</taxon>
        <taxon>Myomorpha</taxon>
        <taxon>Muroidea</taxon>
        <taxon>Muridae</taxon>
        <taxon>Murinae</taxon>
        <taxon>Mus</taxon>
        <taxon>Mus</taxon>
    </lineage>
</organism>
<feature type="initiator methionine" description="Removed" evidence="13">
    <location>
        <position position="1"/>
    </location>
</feature>
<feature type="chain" id="PRO_0000167837" description="Retinoblastoma-associated protein">
    <location>
        <begin position="2"/>
        <end position="921"/>
    </location>
</feature>
<feature type="region of interest" description="Disordered" evidence="4">
    <location>
        <begin position="1"/>
        <end position="36"/>
    </location>
</feature>
<feature type="region of interest" description="Disordered" evidence="4">
    <location>
        <begin position="341"/>
        <end position="360"/>
    </location>
</feature>
<feature type="region of interest" description="Pocket; binds T and E1A" evidence="1">
    <location>
        <begin position="367"/>
        <end position="764"/>
    </location>
</feature>
<feature type="region of interest" description="Domain A" evidence="1">
    <location>
        <begin position="367"/>
        <end position="573"/>
    </location>
</feature>
<feature type="region of interest" description="Spacer" evidence="1">
    <location>
        <begin position="574"/>
        <end position="632"/>
    </location>
</feature>
<feature type="region of interest" description="Domain B" evidence="1">
    <location>
        <begin position="633"/>
        <end position="764"/>
    </location>
</feature>
<feature type="region of interest" description="Interaction with LIMD1" evidence="1">
    <location>
        <begin position="756"/>
        <end position="921"/>
    </location>
</feature>
<feature type="region of interest" description="Domain; mediates interaction with E4F1" evidence="1">
    <location>
        <begin position="764"/>
        <end position="921"/>
    </location>
</feature>
<feature type="region of interest" description="Disordered" evidence="4">
    <location>
        <begin position="872"/>
        <end position="921"/>
    </location>
</feature>
<feature type="short sequence motif" description="Bipartite nuclear localization signal" evidence="16">
    <location>
        <begin position="853"/>
        <end position="869"/>
    </location>
</feature>
<feature type="compositionally biased region" description="Basic and acidic residues" evidence="4">
    <location>
        <begin position="346"/>
        <end position="356"/>
    </location>
</feature>
<feature type="compositionally biased region" description="Basic and acidic residues" evidence="4">
    <location>
        <begin position="908"/>
        <end position="921"/>
    </location>
</feature>
<feature type="modified residue" description="N,N-dimethylproline; by NTM1" evidence="13">
    <location>
        <position position="2"/>
    </location>
</feature>
<feature type="modified residue" description="Phosphoserine" evidence="19">
    <location>
        <position position="31"/>
    </location>
</feature>
<feature type="modified residue" description="Phosphoserine" evidence="19">
    <location>
        <position position="243"/>
    </location>
</feature>
<feature type="modified residue" description="Phosphothreonine" evidence="19">
    <location>
        <position position="246"/>
    </location>
</feature>
<feature type="modified residue" description="Phosphothreonine" evidence="2">
    <location>
        <position position="350"/>
    </location>
</feature>
<feature type="modified residue" description="Phosphothreonine" evidence="19">
    <location>
        <position position="364"/>
    </location>
</feature>
<feature type="modified residue" description="Phosphothreonine" evidence="19">
    <location>
        <position position="367"/>
    </location>
</feature>
<feature type="modified residue" description="Phosphoserine; by CDK2" evidence="2">
    <location>
        <position position="561"/>
    </location>
</feature>
<feature type="modified residue" description="Phosphoserine" evidence="19">
    <location>
        <position position="601"/>
    </location>
</feature>
<feature type="modified residue" description="Phosphoserine" evidence="19">
    <location>
        <position position="605"/>
    </location>
</feature>
<feature type="modified residue" description="Phosphoserine" evidence="2">
    <location>
        <position position="617"/>
    </location>
</feature>
<feature type="modified residue" description="Phosphoserine" evidence="19">
    <location>
        <position position="773"/>
    </location>
</feature>
<feature type="modified residue" description="Phosphoserine" evidence="2">
    <location>
        <position position="781"/>
    </location>
</feature>
<feature type="modified residue" description="Phosphoserine" evidence="2">
    <location>
        <position position="788"/>
    </location>
</feature>
<feature type="modified residue" description="Phosphoserine" evidence="19">
    <location>
        <position position="800"/>
    </location>
</feature>
<feature type="modified residue" description="N6-methyllysine; by SMYD2" evidence="2">
    <location>
        <position position="803"/>
    </location>
</feature>
<feature type="modified residue" description="Phosphoserine" evidence="19">
    <location>
        <position position="804"/>
    </location>
</feature>
<feature type="modified residue" description="Phosphothreonine" evidence="19">
    <location>
        <position position="814"/>
    </location>
</feature>
<feature type="modified residue" description="Phosphothreonine" evidence="2">
    <location>
        <position position="816"/>
    </location>
</feature>
<feature type="modified residue" description="Phosphothreonine" evidence="19">
    <location>
        <position position="819"/>
    </location>
</feature>
<feature type="modified residue" description="Phosphothreonine" evidence="2">
    <location>
        <position position="834"/>
    </location>
</feature>
<feature type="modified residue" description="Phosphoserine" evidence="19">
    <location>
        <position position="848"/>
    </location>
</feature>
<feature type="modified residue" description="N6-methyllysine; by SMYD2" evidence="2">
    <location>
        <position position="853"/>
    </location>
</feature>
<feature type="modified residue" description="N6-acetyllysine; by PCAF" evidence="2">
    <location>
        <position position="866"/>
    </location>
</feature>
<feature type="modified residue" description="N6-acetyllysine; by PCAF" evidence="2">
    <location>
        <position position="867"/>
    </location>
</feature>
<feature type="mutagenesis site" description="Loss of exclusive nuclear localization. Complete loss of nuclear localization, loss of growth inhibition, when transfected in Saos-2 cells and loss of interaction with SV40 large T antigen, adenovirus E1a and E2F1; when associated with 866-N--Q-869." evidence="16">
    <location>
        <begin position="733"/>
        <end position="769"/>
    </location>
</feature>
<feature type="mutagenesis site" description="Abolishes the interaction with many chromatin regulators but not that with KMT5B and KMT5C; when associated with A-750 and A-754." evidence="11">
    <original>I</original>
    <variation>A</variation>
    <location>
        <position position="746"/>
    </location>
</feature>
<feature type="mutagenesis site" description="Abolishes the interaction with many chromatin regulators but not that with KMT5B and KMT5C; when associated with A-746 and A-754." evidence="11">
    <original>N</original>
    <variation>A</variation>
    <location>
        <position position="750"/>
    </location>
</feature>
<feature type="mutagenesis site" description="Abolishes the interaction with many chromatin regulators but not that with KMT5B and KMT5C; when associated with A-746 and A-750." evidence="11">
    <original>M</original>
    <variation>A</variation>
    <location>
        <position position="754"/>
    </location>
</feature>
<feature type="mutagenesis site" description="Loss of exclusive nuclear localization and loss of growth inhibition, when transfected in Saos-2 cells. No effect on the interaction with SV40 large T antigen." evidence="16">
    <location>
        <begin position="769"/>
        <end position="872"/>
    </location>
</feature>
<feature type="mutagenesis site" description="Loss of exclusive nuclear localization. Decreased growth inhibition activity, when transfected in Saos-2 cells. No effect on the interaction with SV40 large T antigen, adenovirus E1a, nor E2F1." evidence="16">
    <location>
        <begin position="853"/>
        <end position="869"/>
    </location>
</feature>
<feature type="mutagenesis site" description="Loss of exclusive nuclear localization, no effect on the interaction with SV40 large T antigen, adenovirus E1a, nor E2F1. Decreased growth inhibition activity, when transfected in Saos-2 cells. Complete loss of nuclear localization, loss of growth inhibition, when transfected in Saos-2 cells and loss of interaction with SV40 large T antigen, adenovirus E1a and E2F1; when associated with 733-K--P-769." evidence="16">
    <original>KKLR</original>
    <variation>NKLQ</variation>
    <location>
        <begin position="866"/>
        <end position="869"/>
    </location>
</feature>
<feature type="sequence conflict" description="In Ref. 1; AAA39964." evidence="18" ref="1">
    <original>KL</original>
    <variation>NV</variation>
    <location>
        <begin position="867"/>
        <end position="868"/>
    </location>
</feature>
<keyword id="KW-0007">Acetylation</keyword>
<keyword id="KW-0131">Cell cycle</keyword>
<keyword id="KW-0156">Chromatin regulator</keyword>
<keyword id="KW-0963">Cytoplasm</keyword>
<keyword id="KW-0238">DNA-binding</keyword>
<keyword id="KW-0488">Methylation</keyword>
<keyword id="KW-0539">Nucleus</keyword>
<keyword id="KW-0597">Phosphoprotein</keyword>
<keyword id="KW-1185">Reference proteome</keyword>
<keyword id="KW-0678">Repressor</keyword>
<keyword id="KW-0804">Transcription</keyword>
<keyword id="KW-0805">Transcription regulation</keyword>
<keyword id="KW-0043">Tumor suppressor</keyword>
<sequence length="921" mass="105367">MPPKAPRRAAAAEPPPPPPPPPREDDPAQDSGPEELPLARLEFEEIEEPEFIALCQKLKVPDHVRERAWLTWEKVSSVDGILEGYIQKKKELWGICIFIAAVDLDEMPFTFTELQKSIETSVYKFFDLLKEIDTSTKVDNAMSRLLKKYNVLCALYSKLERTCELIYLTQPSSALSTEINSMLVLKISWITFLLAKGEVLQMEDDLVISFQLMLCVVDYFIKFSPPALLREPYKTAAIPINGSPRTPRRGQNRSARIAKQLENDTRIIEVLCKEHECNIDEVKNVYFKNFIPFINSLGIVSSNGLPEVESLSKRYEEVYLKNKDLDARLFLDHDKTLQTDPIDSFETERTPRKNNPDEEANVVTPHTPVRTVMNTIQQLMVILNSASDQPSENLISYFNNCTVNPKENILKRVKDVGHIFKEKFANAVGQGCVDIGVQRYKLGVRLYYRVMESMLKSEEERLSIQNFSKLLNDNIFHMSLLACALEVVMATYSRSTLQHLDSGTDLSFPWILNVLNLKAFDFYKVIESFIKVEANLTREMIKHLERCEHRIMESLAWLSDSPLFDLIKQSKDGEGPDNLEPACPLSLPLQGNHTAADMYLSPLRSPKKRTSTTRVNSAANTETQAASAFHTQKPLKSTSLALFYKKVYRLAYLRLNTLCARLLSDHPELEHIIWTLFQHTLQNEYELMRDRHLDQIMMCSMYGICKVKNIDLKFKIIVTAYKDLPHAAQETFKRVLIREEEFDSIIVFYNSVFMQRLKTNILQYASTRPPTLSPIPHIPRSPYKFSSSPLRIPGGNIYISPLKSPYKISEGLPTPTKMTPRSRILVSIGESFGTSEKFQKINQMVCNSDRVLKRSAEGGNPPKPLKKLRFDIEGADEADGSKHLPAESKFQQKLAEMTSTRTRMQKQRMNESKDVSNKEEK</sequence>
<gene>
    <name type="primary">Rb1</name>
    <name type="synonym">Rb-1</name>
</gene>
<proteinExistence type="evidence at protein level"/>
<evidence type="ECO:0000250" key="1"/>
<evidence type="ECO:0000250" key="2">
    <source>
        <dbReference type="UniProtKB" id="P06400"/>
    </source>
</evidence>
<evidence type="ECO:0000250" key="3">
    <source>
        <dbReference type="UniProtKB" id="P33568"/>
    </source>
</evidence>
<evidence type="ECO:0000256" key="4">
    <source>
        <dbReference type="SAM" id="MobiDB-lite"/>
    </source>
</evidence>
<evidence type="ECO:0000269" key="5">
    <source>
    </source>
</evidence>
<evidence type="ECO:0000269" key="6">
    <source>
    </source>
</evidence>
<evidence type="ECO:0000269" key="7">
    <source>
    </source>
</evidence>
<evidence type="ECO:0000269" key="8">
    <source>
    </source>
</evidence>
<evidence type="ECO:0000269" key="9">
    <source>
    </source>
</evidence>
<evidence type="ECO:0000269" key="10">
    <source>
    </source>
</evidence>
<evidence type="ECO:0000269" key="11">
    <source>
    </source>
</evidence>
<evidence type="ECO:0000269" key="12">
    <source>
    </source>
</evidence>
<evidence type="ECO:0000269" key="13">
    <source>
    </source>
</evidence>
<evidence type="ECO:0000269" key="14">
    <source>
    </source>
</evidence>
<evidence type="ECO:0000269" key="15">
    <source>
    </source>
</evidence>
<evidence type="ECO:0000269" key="16">
    <source>
    </source>
</evidence>
<evidence type="ECO:0000303" key="17">
    <source>
    </source>
</evidence>
<evidence type="ECO:0000305" key="18"/>
<evidence type="ECO:0007744" key="19">
    <source>
    </source>
</evidence>